<dbReference type="EMBL" id="AM260522">
    <property type="protein sequence ID" value="CAK00252.1"/>
    <property type="molecule type" value="Genomic_DNA"/>
</dbReference>
<dbReference type="RefSeq" id="WP_011578338.1">
    <property type="nucleotide sequence ID" value="NC_008229.1"/>
</dbReference>
<dbReference type="SMR" id="Q17VS4"/>
<dbReference type="STRING" id="382638.Hac_1535"/>
<dbReference type="GeneID" id="31758803"/>
<dbReference type="KEGG" id="hac:Hac_1535"/>
<dbReference type="eggNOG" id="COG2371">
    <property type="taxonomic scope" value="Bacteria"/>
</dbReference>
<dbReference type="HOGENOM" id="CLU_093757_3_0_7"/>
<dbReference type="OrthoDB" id="9810882at2"/>
<dbReference type="BioCyc" id="HACI382638:HAC_RS06510-MONOMER"/>
<dbReference type="Proteomes" id="UP000000775">
    <property type="component" value="Chromosome"/>
</dbReference>
<dbReference type="GO" id="GO:0005737">
    <property type="term" value="C:cytoplasm"/>
    <property type="evidence" value="ECO:0007669"/>
    <property type="project" value="UniProtKB-SubCell"/>
</dbReference>
<dbReference type="GO" id="GO:0016151">
    <property type="term" value="F:nickel cation binding"/>
    <property type="evidence" value="ECO:0007669"/>
    <property type="project" value="UniProtKB-UniRule"/>
</dbReference>
<dbReference type="GO" id="GO:0051082">
    <property type="term" value="F:unfolded protein binding"/>
    <property type="evidence" value="ECO:0007669"/>
    <property type="project" value="UniProtKB-UniRule"/>
</dbReference>
<dbReference type="GO" id="GO:0006457">
    <property type="term" value="P:protein folding"/>
    <property type="evidence" value="ECO:0007669"/>
    <property type="project" value="InterPro"/>
</dbReference>
<dbReference type="GO" id="GO:0065003">
    <property type="term" value="P:protein-containing complex assembly"/>
    <property type="evidence" value="ECO:0007669"/>
    <property type="project" value="InterPro"/>
</dbReference>
<dbReference type="GO" id="GO:0019627">
    <property type="term" value="P:urea metabolic process"/>
    <property type="evidence" value="ECO:0007669"/>
    <property type="project" value="InterPro"/>
</dbReference>
<dbReference type="CDD" id="cd00571">
    <property type="entry name" value="UreE"/>
    <property type="match status" value="1"/>
</dbReference>
<dbReference type="Gene3D" id="2.60.260.20">
    <property type="entry name" value="Urease metallochaperone UreE, N-terminal domain"/>
    <property type="match status" value="1"/>
</dbReference>
<dbReference type="Gene3D" id="3.30.70.790">
    <property type="entry name" value="UreE, C-terminal domain"/>
    <property type="match status" value="1"/>
</dbReference>
<dbReference type="HAMAP" id="MF_00822">
    <property type="entry name" value="UreE"/>
    <property type="match status" value="1"/>
</dbReference>
<dbReference type="InterPro" id="IPR012406">
    <property type="entry name" value="UreE"/>
</dbReference>
<dbReference type="InterPro" id="IPR007864">
    <property type="entry name" value="UreE_C_dom"/>
</dbReference>
<dbReference type="InterPro" id="IPR004029">
    <property type="entry name" value="UreE_N"/>
</dbReference>
<dbReference type="InterPro" id="IPR036118">
    <property type="entry name" value="UreE_N_sf"/>
</dbReference>
<dbReference type="NCBIfam" id="NF009754">
    <property type="entry name" value="PRK13261.1-6"/>
    <property type="match status" value="1"/>
</dbReference>
<dbReference type="Pfam" id="PF05194">
    <property type="entry name" value="UreE_C"/>
    <property type="match status" value="1"/>
</dbReference>
<dbReference type="Pfam" id="PF02814">
    <property type="entry name" value="UreE_N"/>
    <property type="match status" value="1"/>
</dbReference>
<dbReference type="PIRSF" id="PIRSF036402">
    <property type="entry name" value="Ureas_acces_UreE"/>
    <property type="match status" value="1"/>
</dbReference>
<dbReference type="SMART" id="SM00988">
    <property type="entry name" value="UreE_N"/>
    <property type="match status" value="1"/>
</dbReference>
<dbReference type="SUPFAM" id="SSF69737">
    <property type="entry name" value="Urease metallochaperone UreE, C-terminal domain"/>
    <property type="match status" value="1"/>
</dbReference>
<dbReference type="SUPFAM" id="SSF69287">
    <property type="entry name" value="Urease metallochaperone UreE, N-terminal domain"/>
    <property type="match status" value="1"/>
</dbReference>
<proteinExistence type="inferred from homology"/>
<name>UREE_HELAH</name>
<comment type="function">
    <text evidence="1">Involved in urease metallocenter assembly. Binds nickel. Probably functions as a nickel donor during metallocenter assembly.</text>
</comment>
<comment type="subcellular location">
    <subcellularLocation>
        <location evidence="1">Cytoplasm</location>
    </subcellularLocation>
</comment>
<comment type="similarity">
    <text evidence="1">Belongs to the UreE family.</text>
</comment>
<protein>
    <recommendedName>
        <fullName evidence="1">Urease accessory protein UreE</fullName>
    </recommendedName>
</protein>
<organism>
    <name type="scientific">Helicobacter acinonychis (strain Sheeba)</name>
    <dbReference type="NCBI Taxonomy" id="382638"/>
    <lineage>
        <taxon>Bacteria</taxon>
        <taxon>Pseudomonadati</taxon>
        <taxon>Campylobacterota</taxon>
        <taxon>Epsilonproteobacteria</taxon>
        <taxon>Campylobacterales</taxon>
        <taxon>Helicobacteraceae</taxon>
        <taxon>Helicobacter</taxon>
    </lineage>
</organism>
<accession>Q17VS4</accession>
<evidence type="ECO:0000255" key="1">
    <source>
        <dbReference type="HAMAP-Rule" id="MF_00822"/>
    </source>
</evidence>
<feature type="chain" id="PRO_1000062547" description="Urease accessory protein UreE">
    <location>
        <begin position="1"/>
        <end position="170"/>
    </location>
</feature>
<keyword id="KW-0143">Chaperone</keyword>
<keyword id="KW-0963">Cytoplasm</keyword>
<keyword id="KW-0533">Nickel</keyword>
<keyword id="KW-0996">Nickel insertion</keyword>
<gene>
    <name evidence="1" type="primary">ureE</name>
    <name type="ordered locus">Hac_1535</name>
</gene>
<sequence length="170" mass="19554">MIIERLTGNLRDLNPLDFKVDYVDLEWFETRKKIARFKTRQGKDIAIRLKDAPKLGLSQGDILFKEEKEIIAINILDSEVIHIQAKSVAEVAKICYEIGNRHATLYYGESQFEFKTPFEKPTLALLEKLGVQNRVLSSKLDSKERLTVSMPHNEPNFKVSLASDFKVVMK</sequence>
<reference key="1">
    <citation type="journal article" date="2006" name="PLoS Genet.">
        <title>Who ate whom? Adaptive Helicobacter genomic changes that accompanied a host jump from early humans to large felines.</title>
        <authorList>
            <person name="Eppinger M."/>
            <person name="Baar C."/>
            <person name="Linz B."/>
            <person name="Raddatz G."/>
            <person name="Lanz C."/>
            <person name="Keller H."/>
            <person name="Morelli G."/>
            <person name="Gressmann H."/>
            <person name="Achtman M."/>
            <person name="Schuster S.C."/>
        </authorList>
    </citation>
    <scope>NUCLEOTIDE SEQUENCE [LARGE SCALE GENOMIC DNA]</scope>
    <source>
        <strain>Sheeba</strain>
    </source>
</reference>